<keyword id="KW-0687">Ribonucleoprotein</keyword>
<keyword id="KW-0689">Ribosomal protein</keyword>
<keyword id="KW-0694">RNA-binding</keyword>
<keyword id="KW-0699">rRNA-binding</keyword>
<protein>
    <recommendedName>
        <fullName evidence="1">Large ribosomal subunit protein uL23</fullName>
    </recommendedName>
    <alternativeName>
        <fullName evidence="2">50S ribosomal protein L23</fullName>
    </alternativeName>
</protein>
<organism>
    <name type="scientific">Streptococcus pyogenes serotype M6 (strain ATCC BAA-946 / MGAS10394)</name>
    <dbReference type="NCBI Taxonomy" id="286636"/>
    <lineage>
        <taxon>Bacteria</taxon>
        <taxon>Bacillati</taxon>
        <taxon>Bacillota</taxon>
        <taxon>Bacilli</taxon>
        <taxon>Lactobacillales</taxon>
        <taxon>Streptococcaceae</taxon>
        <taxon>Streptococcus</taxon>
    </lineage>
</organism>
<reference key="1">
    <citation type="journal article" date="2004" name="J. Infect. Dis.">
        <title>Progress toward characterization of the group A Streptococcus metagenome: complete genome sequence of a macrolide-resistant serotype M6 strain.</title>
        <authorList>
            <person name="Banks D.J."/>
            <person name="Porcella S.F."/>
            <person name="Barbian K.D."/>
            <person name="Beres S.B."/>
            <person name="Philips L.E."/>
            <person name="Voyich J.M."/>
            <person name="DeLeo F.R."/>
            <person name="Martin J.M."/>
            <person name="Somerville G.A."/>
            <person name="Musser J.M."/>
        </authorList>
    </citation>
    <scope>NUCLEOTIDE SEQUENCE [LARGE SCALE GENOMIC DNA]</scope>
    <source>
        <strain>ATCC BAA-946 / MGAS10394</strain>
    </source>
</reference>
<comment type="function">
    <text evidence="1">One of the early assembly proteins it binds 23S rRNA. One of the proteins that surrounds the polypeptide exit tunnel on the outside of the ribosome. Forms the main docking site for trigger factor binding to the ribosome.</text>
</comment>
<comment type="subunit">
    <text evidence="1">Part of the 50S ribosomal subunit. Contacts protein L29, and trigger factor when it is bound to the ribosome.</text>
</comment>
<comment type="similarity">
    <text evidence="1">Belongs to the universal ribosomal protein uL23 family.</text>
</comment>
<proteinExistence type="inferred from homology"/>
<feature type="chain" id="PRO_1000068164" description="Large ribosomal subunit protein uL23">
    <location>
        <begin position="1"/>
        <end position="98"/>
    </location>
</feature>
<gene>
    <name evidence="1" type="primary">rplW</name>
    <name type="ordered locus">M6_Spy0095</name>
</gene>
<accession>Q5XED3</accession>
<sequence length="98" mass="10732">MNLYDVIKKPVITEKSMIALEAGKYTFEVDTRAHKLLIKQAVEAAFDGVKVASVNTVNVKPKAKRVGRYTGFTSKTKKAIITLTADSKAIELFAAEAE</sequence>
<dbReference type="EMBL" id="CP000003">
    <property type="protein sequence ID" value="AAT86230.1"/>
    <property type="molecule type" value="Genomic_DNA"/>
</dbReference>
<dbReference type="RefSeq" id="WP_002986656.1">
    <property type="nucleotide sequence ID" value="NC_006086.1"/>
</dbReference>
<dbReference type="SMR" id="Q5XED3"/>
<dbReference type="KEGG" id="spa:M6_Spy0095"/>
<dbReference type="HOGENOM" id="CLU_037562_3_2_9"/>
<dbReference type="Proteomes" id="UP000001167">
    <property type="component" value="Chromosome"/>
</dbReference>
<dbReference type="GO" id="GO:1990904">
    <property type="term" value="C:ribonucleoprotein complex"/>
    <property type="evidence" value="ECO:0007669"/>
    <property type="project" value="UniProtKB-KW"/>
</dbReference>
<dbReference type="GO" id="GO:0005840">
    <property type="term" value="C:ribosome"/>
    <property type="evidence" value="ECO:0007669"/>
    <property type="project" value="UniProtKB-KW"/>
</dbReference>
<dbReference type="GO" id="GO:0019843">
    <property type="term" value="F:rRNA binding"/>
    <property type="evidence" value="ECO:0007669"/>
    <property type="project" value="UniProtKB-UniRule"/>
</dbReference>
<dbReference type="GO" id="GO:0003735">
    <property type="term" value="F:structural constituent of ribosome"/>
    <property type="evidence" value="ECO:0007669"/>
    <property type="project" value="InterPro"/>
</dbReference>
<dbReference type="GO" id="GO:0006412">
    <property type="term" value="P:translation"/>
    <property type="evidence" value="ECO:0007669"/>
    <property type="project" value="UniProtKB-UniRule"/>
</dbReference>
<dbReference type="FunFam" id="3.30.70.330:FF:000001">
    <property type="entry name" value="50S ribosomal protein L23"/>
    <property type="match status" value="1"/>
</dbReference>
<dbReference type="Gene3D" id="3.30.70.330">
    <property type="match status" value="1"/>
</dbReference>
<dbReference type="HAMAP" id="MF_01369_B">
    <property type="entry name" value="Ribosomal_uL23_B"/>
    <property type="match status" value="1"/>
</dbReference>
<dbReference type="InterPro" id="IPR012677">
    <property type="entry name" value="Nucleotide-bd_a/b_plait_sf"/>
</dbReference>
<dbReference type="InterPro" id="IPR013025">
    <property type="entry name" value="Ribosomal_uL23-like"/>
</dbReference>
<dbReference type="InterPro" id="IPR012678">
    <property type="entry name" value="Ribosomal_uL23/eL15/eS24_sf"/>
</dbReference>
<dbReference type="InterPro" id="IPR001014">
    <property type="entry name" value="Ribosomal_uL23_CS"/>
</dbReference>
<dbReference type="NCBIfam" id="NF004361">
    <property type="entry name" value="PRK05738.2-1"/>
    <property type="match status" value="1"/>
</dbReference>
<dbReference type="NCBIfam" id="NF004363">
    <property type="entry name" value="PRK05738.2-4"/>
    <property type="match status" value="1"/>
</dbReference>
<dbReference type="PANTHER" id="PTHR11620">
    <property type="entry name" value="60S RIBOSOMAL PROTEIN L23A"/>
    <property type="match status" value="1"/>
</dbReference>
<dbReference type="Pfam" id="PF00276">
    <property type="entry name" value="Ribosomal_L23"/>
    <property type="match status" value="1"/>
</dbReference>
<dbReference type="SUPFAM" id="SSF54189">
    <property type="entry name" value="Ribosomal proteins S24e, L23 and L15e"/>
    <property type="match status" value="1"/>
</dbReference>
<dbReference type="PROSITE" id="PS00050">
    <property type="entry name" value="RIBOSOMAL_L23"/>
    <property type="match status" value="1"/>
</dbReference>
<evidence type="ECO:0000255" key="1">
    <source>
        <dbReference type="HAMAP-Rule" id="MF_01369"/>
    </source>
</evidence>
<evidence type="ECO:0000305" key="2"/>
<name>RL23_STRP6</name>